<reference key="1">
    <citation type="journal article" date="2006" name="Mol. Microbiol.">
        <title>Role of pathogenicity island-associated integrases in the genome plasticity of uropathogenic Escherichia coli strain 536.</title>
        <authorList>
            <person name="Hochhut B."/>
            <person name="Wilde C."/>
            <person name="Balling G."/>
            <person name="Middendorf B."/>
            <person name="Dobrindt U."/>
            <person name="Brzuszkiewicz E."/>
            <person name="Gottschalk G."/>
            <person name="Carniel E."/>
            <person name="Hacker J."/>
        </authorList>
    </citation>
    <scope>NUCLEOTIDE SEQUENCE [LARGE SCALE GENOMIC DNA]</scope>
    <source>
        <strain>536 / UPEC</strain>
    </source>
</reference>
<organism>
    <name type="scientific">Escherichia coli O6:K15:H31 (strain 536 / UPEC)</name>
    <dbReference type="NCBI Taxonomy" id="362663"/>
    <lineage>
        <taxon>Bacteria</taxon>
        <taxon>Pseudomonadati</taxon>
        <taxon>Pseudomonadota</taxon>
        <taxon>Gammaproteobacteria</taxon>
        <taxon>Enterobacterales</taxon>
        <taxon>Enterobacteriaceae</taxon>
        <taxon>Escherichia</taxon>
    </lineage>
</organism>
<keyword id="KW-0028">Amino-acid biosynthesis</keyword>
<keyword id="KW-0170">Cobalt</keyword>
<keyword id="KW-0220">Diaminopimelate biosynthesis</keyword>
<keyword id="KW-0378">Hydrolase</keyword>
<keyword id="KW-0457">Lysine biosynthesis</keyword>
<keyword id="KW-0479">Metal-binding</keyword>
<keyword id="KW-0862">Zinc</keyword>
<feature type="chain" id="PRO_0000375567" description="Succinyl-diaminopimelate desuccinylase">
    <location>
        <begin position="1"/>
        <end position="375"/>
    </location>
</feature>
<feature type="active site" evidence="1">
    <location>
        <position position="68"/>
    </location>
</feature>
<feature type="active site" description="Proton acceptor" evidence="1">
    <location>
        <position position="133"/>
    </location>
</feature>
<feature type="binding site" evidence="1">
    <location>
        <position position="66"/>
    </location>
    <ligand>
        <name>Zn(2+)</name>
        <dbReference type="ChEBI" id="CHEBI:29105"/>
        <label>1</label>
    </ligand>
</feature>
<feature type="binding site" evidence="1">
    <location>
        <position position="99"/>
    </location>
    <ligand>
        <name>Zn(2+)</name>
        <dbReference type="ChEBI" id="CHEBI:29105"/>
        <label>1</label>
    </ligand>
</feature>
<feature type="binding site" evidence="1">
    <location>
        <position position="99"/>
    </location>
    <ligand>
        <name>Zn(2+)</name>
        <dbReference type="ChEBI" id="CHEBI:29105"/>
        <label>2</label>
    </ligand>
</feature>
<feature type="binding site" evidence="1">
    <location>
        <position position="134"/>
    </location>
    <ligand>
        <name>Zn(2+)</name>
        <dbReference type="ChEBI" id="CHEBI:29105"/>
        <label>2</label>
    </ligand>
</feature>
<feature type="binding site" evidence="1">
    <location>
        <position position="162"/>
    </location>
    <ligand>
        <name>Zn(2+)</name>
        <dbReference type="ChEBI" id="CHEBI:29105"/>
        <label>1</label>
    </ligand>
</feature>
<feature type="binding site" evidence="1">
    <location>
        <position position="348"/>
    </location>
    <ligand>
        <name>Zn(2+)</name>
        <dbReference type="ChEBI" id="CHEBI:29105"/>
        <label>2</label>
    </ligand>
</feature>
<accession>Q0TF05</accession>
<sequence length="375" mass="41327">MSCPVIELTQQLIRRPSLSPDDAGCQALLIERLQAIGFTVERMDFADTQNFWAWRGQGETLAFAGHTDVVPPGDADRWINPPFEPTIRDGMLFGRGAADMKGSLAAMVVAAERFVAQHPNHTGRLAFLITSDEEASAHNGTVKVVEALMARNERLDYCLVGEPSSIEVVGDVVKNGRRGSLTCNLTIHGVQGHVAYPHLADNPVHRAAPFINELVAIEWDQGNEFFPATSMQIANIQAGTGSNNVIPGELFVQFNFRFSTELTDEMIKEQVLALLEKHQLRYTVDWWLSGQPFLTARGKLVDAVVNAVEHYNEIKPQLLTTGGTSDGRFIARMGAQVVELGPVNATIHKINECVNAADLQLLARMYQRIMEQLVA</sequence>
<comment type="function">
    <text evidence="1">Catalyzes the hydrolysis of N-succinyl-L,L-diaminopimelic acid (SDAP), forming succinate and LL-2,6-diaminopimelate (DAP), an intermediate involved in the bacterial biosynthesis of lysine and meso-diaminopimelic acid, an essential component of bacterial cell walls.</text>
</comment>
<comment type="catalytic activity">
    <reaction evidence="1">
        <text>N-succinyl-(2S,6S)-2,6-diaminopimelate + H2O = (2S,6S)-2,6-diaminopimelate + succinate</text>
        <dbReference type="Rhea" id="RHEA:22608"/>
        <dbReference type="ChEBI" id="CHEBI:15377"/>
        <dbReference type="ChEBI" id="CHEBI:30031"/>
        <dbReference type="ChEBI" id="CHEBI:57609"/>
        <dbReference type="ChEBI" id="CHEBI:58087"/>
        <dbReference type="EC" id="3.5.1.18"/>
    </reaction>
</comment>
<comment type="cofactor">
    <cofactor evidence="1">
        <name>Zn(2+)</name>
        <dbReference type="ChEBI" id="CHEBI:29105"/>
    </cofactor>
    <cofactor evidence="1">
        <name>Co(2+)</name>
        <dbReference type="ChEBI" id="CHEBI:48828"/>
    </cofactor>
    <text evidence="1">Binds 2 Zn(2+) or Co(2+) ions per subunit.</text>
</comment>
<comment type="pathway">
    <text evidence="1">Amino-acid biosynthesis; L-lysine biosynthesis via DAP pathway; LL-2,6-diaminopimelate from (S)-tetrahydrodipicolinate (succinylase route): step 3/3.</text>
</comment>
<comment type="subunit">
    <text evidence="1">Homodimer.</text>
</comment>
<comment type="similarity">
    <text evidence="1">Belongs to the peptidase M20A family. DapE subfamily.</text>
</comment>
<gene>
    <name evidence="1" type="primary">dapE</name>
    <name type="ordered locus">ECP_2485</name>
</gene>
<proteinExistence type="inferred from homology"/>
<dbReference type="EC" id="3.5.1.18" evidence="1"/>
<dbReference type="EMBL" id="CP000247">
    <property type="protein sequence ID" value="ABG70474.1"/>
    <property type="molecule type" value="Genomic_DNA"/>
</dbReference>
<dbReference type="RefSeq" id="WP_001277798.1">
    <property type="nucleotide sequence ID" value="NC_008253.1"/>
</dbReference>
<dbReference type="SMR" id="Q0TF05"/>
<dbReference type="MEROPS" id="M20.010"/>
<dbReference type="KEGG" id="ecp:ECP_2485"/>
<dbReference type="HOGENOM" id="CLU_021802_4_0_6"/>
<dbReference type="UniPathway" id="UPA00034">
    <property type="reaction ID" value="UER00021"/>
</dbReference>
<dbReference type="Proteomes" id="UP000009182">
    <property type="component" value="Chromosome"/>
</dbReference>
<dbReference type="GO" id="GO:0008777">
    <property type="term" value="F:acetylornithine deacetylase activity"/>
    <property type="evidence" value="ECO:0007669"/>
    <property type="project" value="TreeGrafter"/>
</dbReference>
<dbReference type="GO" id="GO:0050897">
    <property type="term" value="F:cobalt ion binding"/>
    <property type="evidence" value="ECO:0007669"/>
    <property type="project" value="UniProtKB-UniRule"/>
</dbReference>
<dbReference type="GO" id="GO:0009014">
    <property type="term" value="F:succinyl-diaminopimelate desuccinylase activity"/>
    <property type="evidence" value="ECO:0007669"/>
    <property type="project" value="UniProtKB-UniRule"/>
</dbReference>
<dbReference type="GO" id="GO:0008270">
    <property type="term" value="F:zinc ion binding"/>
    <property type="evidence" value="ECO:0007669"/>
    <property type="project" value="UniProtKB-UniRule"/>
</dbReference>
<dbReference type="GO" id="GO:0019877">
    <property type="term" value="P:diaminopimelate biosynthetic process"/>
    <property type="evidence" value="ECO:0007669"/>
    <property type="project" value="UniProtKB-UniRule"/>
</dbReference>
<dbReference type="GO" id="GO:0006526">
    <property type="term" value="P:L-arginine biosynthetic process"/>
    <property type="evidence" value="ECO:0007669"/>
    <property type="project" value="TreeGrafter"/>
</dbReference>
<dbReference type="GO" id="GO:0009089">
    <property type="term" value="P:lysine biosynthetic process via diaminopimelate"/>
    <property type="evidence" value="ECO:0007669"/>
    <property type="project" value="UniProtKB-UniRule"/>
</dbReference>
<dbReference type="CDD" id="cd03891">
    <property type="entry name" value="M20_DapE_proteobac"/>
    <property type="match status" value="1"/>
</dbReference>
<dbReference type="FunFam" id="3.30.70.360:FF:000011">
    <property type="entry name" value="Succinyl-diaminopimelate desuccinylase"/>
    <property type="match status" value="1"/>
</dbReference>
<dbReference type="FunFam" id="3.40.630.10:FF:000005">
    <property type="entry name" value="Succinyl-diaminopimelate desuccinylase"/>
    <property type="match status" value="1"/>
</dbReference>
<dbReference type="FunFam" id="3.40.630.10:FF:000010">
    <property type="entry name" value="Succinyl-diaminopimelate desuccinylase"/>
    <property type="match status" value="1"/>
</dbReference>
<dbReference type="Gene3D" id="3.40.630.10">
    <property type="entry name" value="Zn peptidases"/>
    <property type="match status" value="2"/>
</dbReference>
<dbReference type="HAMAP" id="MF_01690">
    <property type="entry name" value="DapE"/>
    <property type="match status" value="1"/>
</dbReference>
<dbReference type="InterPro" id="IPR001261">
    <property type="entry name" value="ArgE/DapE_CS"/>
</dbReference>
<dbReference type="InterPro" id="IPR036264">
    <property type="entry name" value="Bact_exopeptidase_dim_dom"/>
</dbReference>
<dbReference type="InterPro" id="IPR005941">
    <property type="entry name" value="DapE_proteobac"/>
</dbReference>
<dbReference type="InterPro" id="IPR002933">
    <property type="entry name" value="Peptidase_M20"/>
</dbReference>
<dbReference type="InterPro" id="IPR011650">
    <property type="entry name" value="Peptidase_M20_dimer"/>
</dbReference>
<dbReference type="InterPro" id="IPR050072">
    <property type="entry name" value="Peptidase_M20A"/>
</dbReference>
<dbReference type="NCBIfam" id="TIGR01246">
    <property type="entry name" value="dapE_proteo"/>
    <property type="match status" value="1"/>
</dbReference>
<dbReference type="NCBIfam" id="NF009557">
    <property type="entry name" value="PRK13009.1"/>
    <property type="match status" value="1"/>
</dbReference>
<dbReference type="PANTHER" id="PTHR43808">
    <property type="entry name" value="ACETYLORNITHINE DEACETYLASE"/>
    <property type="match status" value="1"/>
</dbReference>
<dbReference type="PANTHER" id="PTHR43808:SF31">
    <property type="entry name" value="N-ACETYL-L-CITRULLINE DEACETYLASE"/>
    <property type="match status" value="1"/>
</dbReference>
<dbReference type="Pfam" id="PF07687">
    <property type="entry name" value="M20_dimer"/>
    <property type="match status" value="1"/>
</dbReference>
<dbReference type="Pfam" id="PF01546">
    <property type="entry name" value="Peptidase_M20"/>
    <property type="match status" value="1"/>
</dbReference>
<dbReference type="SUPFAM" id="SSF55031">
    <property type="entry name" value="Bacterial exopeptidase dimerisation domain"/>
    <property type="match status" value="1"/>
</dbReference>
<dbReference type="SUPFAM" id="SSF53187">
    <property type="entry name" value="Zn-dependent exopeptidases"/>
    <property type="match status" value="1"/>
</dbReference>
<dbReference type="PROSITE" id="PS00758">
    <property type="entry name" value="ARGE_DAPE_CPG2_1"/>
    <property type="match status" value="1"/>
</dbReference>
<dbReference type="PROSITE" id="PS00759">
    <property type="entry name" value="ARGE_DAPE_CPG2_2"/>
    <property type="match status" value="1"/>
</dbReference>
<protein>
    <recommendedName>
        <fullName evidence="1">Succinyl-diaminopimelate desuccinylase</fullName>
        <shortName evidence="1">SDAP desuccinylase</shortName>
        <ecNumber evidence="1">3.5.1.18</ecNumber>
    </recommendedName>
    <alternativeName>
        <fullName evidence="1">N-succinyl-LL-2,6-diaminoheptanedioate amidohydrolase</fullName>
    </alternativeName>
</protein>
<evidence type="ECO:0000255" key="1">
    <source>
        <dbReference type="HAMAP-Rule" id="MF_01690"/>
    </source>
</evidence>
<name>DAPE_ECOL5</name>